<accession>P41199</accession>
<accession>D4GWC2</accession>
<feature type="initiator methionine" description="Removed" evidence="1">
    <location>
        <position position="1"/>
    </location>
</feature>
<feature type="chain" id="PRO_0000125796" description="Large ribosomal subunit protein uL1">
    <location>
        <begin position="2"/>
        <end position="212"/>
    </location>
</feature>
<feature type="sequence conflict" description="In Ref. 1; CAA41723." evidence="3" ref="1">
    <location>
        <begin position="69"/>
        <end position="70"/>
    </location>
</feature>
<reference key="1">
    <citation type="journal article" date="1996" name="J. Bacteriol.">
        <title>Conserved sequence elements involved in regulation of ribosomal protein gene expression in halophilic archaea.</title>
        <authorList>
            <person name="Shimmin L.C."/>
            <person name="Dennis P.P."/>
        </authorList>
    </citation>
    <scope>NUCLEOTIDE SEQUENCE [GENOMIC DNA]</scope>
    <source>
        <strain>ATCC 29605 / DSM 3757 / JCM 8879 / NBRC 14742 / NCIMB 2012 / VKM B-1768 / DS2</strain>
    </source>
</reference>
<reference key="2">
    <citation type="journal article" date="2010" name="PLoS ONE">
        <title>The complete genome sequence of Haloferax volcanii DS2, a model archaeon.</title>
        <authorList>
            <person name="Hartman A.L."/>
            <person name="Norais C."/>
            <person name="Badger J.H."/>
            <person name="Delmas S."/>
            <person name="Haldenby S."/>
            <person name="Madupu R."/>
            <person name="Robinson J."/>
            <person name="Khouri H."/>
            <person name="Ren Q."/>
            <person name="Lowe T.M."/>
            <person name="Maupin-Furlow J."/>
            <person name="Pohlschroder M."/>
            <person name="Daniels C."/>
            <person name="Pfeiffer F."/>
            <person name="Allers T."/>
            <person name="Eisen J.A."/>
        </authorList>
    </citation>
    <scope>NUCLEOTIDE SEQUENCE [LARGE SCALE GENOMIC DNA]</scope>
    <source>
        <strain>ATCC 29605 / DSM 3757 / JCM 8879 / NBRC 14742 / NCIMB 2012 / VKM B-1768 / DS2</strain>
    </source>
</reference>
<name>RL1_HALVD</name>
<protein>
    <recommendedName>
        <fullName evidence="2">Large ribosomal subunit protein uL1</fullName>
    </recommendedName>
    <alternativeName>
        <fullName evidence="3">50S ribosomal protein L1</fullName>
    </alternativeName>
</protein>
<evidence type="ECO:0000250" key="1"/>
<evidence type="ECO:0000255" key="2">
    <source>
        <dbReference type="HAMAP-Rule" id="MF_01318"/>
    </source>
</evidence>
<evidence type="ECO:0000305" key="3"/>
<dbReference type="EMBL" id="X58924">
    <property type="protein sequence ID" value="CAA41723.1"/>
    <property type="molecule type" value="Genomic_DNA"/>
</dbReference>
<dbReference type="EMBL" id="CP001956">
    <property type="protein sequence ID" value="ADE03446.1"/>
    <property type="molecule type" value="Genomic_DNA"/>
</dbReference>
<dbReference type="PIR" id="S34135">
    <property type="entry name" value="S34135"/>
</dbReference>
<dbReference type="RefSeq" id="WP_004043003.1">
    <property type="nucleotide sequence ID" value="NC_013967.1"/>
</dbReference>
<dbReference type="SMR" id="P41199"/>
<dbReference type="IntAct" id="P41199">
    <property type="interactions" value="15"/>
</dbReference>
<dbReference type="STRING" id="309800.HVO_2757"/>
<dbReference type="PaxDb" id="309800-C498_09074"/>
<dbReference type="EnsemblBacteria" id="ADE03446">
    <property type="protein sequence ID" value="ADE03446"/>
    <property type="gene ID" value="HVO_2757"/>
</dbReference>
<dbReference type="GeneID" id="8924047"/>
<dbReference type="KEGG" id="hvo:HVO_2757"/>
<dbReference type="eggNOG" id="arCOG04289">
    <property type="taxonomic scope" value="Archaea"/>
</dbReference>
<dbReference type="HOGENOM" id="CLU_062853_4_0_2"/>
<dbReference type="OrthoDB" id="10382at2157"/>
<dbReference type="Proteomes" id="UP000008243">
    <property type="component" value="Chromosome"/>
</dbReference>
<dbReference type="GO" id="GO:0015934">
    <property type="term" value="C:large ribosomal subunit"/>
    <property type="evidence" value="ECO:0007669"/>
    <property type="project" value="InterPro"/>
</dbReference>
<dbReference type="GO" id="GO:0019843">
    <property type="term" value="F:rRNA binding"/>
    <property type="evidence" value="ECO:0007669"/>
    <property type="project" value="UniProtKB-UniRule"/>
</dbReference>
<dbReference type="GO" id="GO:0003735">
    <property type="term" value="F:structural constituent of ribosome"/>
    <property type="evidence" value="ECO:0007669"/>
    <property type="project" value="InterPro"/>
</dbReference>
<dbReference type="GO" id="GO:0000049">
    <property type="term" value="F:tRNA binding"/>
    <property type="evidence" value="ECO:0007669"/>
    <property type="project" value="UniProtKB-KW"/>
</dbReference>
<dbReference type="GO" id="GO:0006417">
    <property type="term" value="P:regulation of translation"/>
    <property type="evidence" value="ECO:0007669"/>
    <property type="project" value="UniProtKB-KW"/>
</dbReference>
<dbReference type="GO" id="GO:0006412">
    <property type="term" value="P:translation"/>
    <property type="evidence" value="ECO:0007669"/>
    <property type="project" value="UniProtKB-UniRule"/>
</dbReference>
<dbReference type="CDD" id="cd00403">
    <property type="entry name" value="Ribosomal_L1"/>
    <property type="match status" value="1"/>
</dbReference>
<dbReference type="FunFam" id="3.40.50.790:FF:000005">
    <property type="entry name" value="50S ribosomal protein L1"/>
    <property type="match status" value="1"/>
</dbReference>
<dbReference type="Gene3D" id="3.30.190.20">
    <property type="match status" value="1"/>
</dbReference>
<dbReference type="Gene3D" id="3.40.50.790">
    <property type="match status" value="1"/>
</dbReference>
<dbReference type="HAMAP" id="MF_01318_A">
    <property type="entry name" value="Ribosomal_uL1_A"/>
    <property type="match status" value="1"/>
</dbReference>
<dbReference type="InterPro" id="IPR002143">
    <property type="entry name" value="Ribosomal_uL1"/>
</dbReference>
<dbReference type="InterPro" id="IPR023674">
    <property type="entry name" value="Ribosomal_uL1-like"/>
</dbReference>
<dbReference type="InterPro" id="IPR028364">
    <property type="entry name" value="Ribosomal_uL1/biogenesis"/>
</dbReference>
<dbReference type="InterPro" id="IPR016095">
    <property type="entry name" value="Ribosomal_uL1_3-a/b-sand"/>
</dbReference>
<dbReference type="InterPro" id="IPR023669">
    <property type="entry name" value="Ribosomal_uL1_arc"/>
</dbReference>
<dbReference type="InterPro" id="IPR023673">
    <property type="entry name" value="Ribosomal_uL1_CS"/>
</dbReference>
<dbReference type="NCBIfam" id="NF003244">
    <property type="entry name" value="PRK04203.1"/>
    <property type="match status" value="1"/>
</dbReference>
<dbReference type="PANTHER" id="PTHR36427">
    <property type="entry name" value="54S RIBOSOMAL PROTEIN L1, MITOCHONDRIAL"/>
    <property type="match status" value="1"/>
</dbReference>
<dbReference type="PANTHER" id="PTHR36427:SF3">
    <property type="entry name" value="LARGE RIBOSOMAL SUBUNIT PROTEIN UL1M"/>
    <property type="match status" value="1"/>
</dbReference>
<dbReference type="Pfam" id="PF00687">
    <property type="entry name" value="Ribosomal_L1"/>
    <property type="match status" value="1"/>
</dbReference>
<dbReference type="PIRSF" id="PIRSF002155">
    <property type="entry name" value="Ribosomal_L1"/>
    <property type="match status" value="1"/>
</dbReference>
<dbReference type="SUPFAM" id="SSF56808">
    <property type="entry name" value="Ribosomal protein L1"/>
    <property type="match status" value="1"/>
</dbReference>
<dbReference type="PROSITE" id="PS01199">
    <property type="entry name" value="RIBOSOMAL_L1"/>
    <property type="match status" value="1"/>
</dbReference>
<comment type="function">
    <text evidence="2">Binds directly to 23S rRNA. Probably involved in E site tRNA release.</text>
</comment>
<comment type="function">
    <text evidence="2">Protein L1 is also a translational repressor protein, it controls the translation of its operon by binding to its mRNA.</text>
</comment>
<comment type="subunit">
    <text evidence="2">Part of the 50S ribosomal subunit.</text>
</comment>
<comment type="similarity">
    <text evidence="2">Belongs to the universal ribosomal protein uL1 family.</text>
</comment>
<proteinExistence type="inferred from homology"/>
<sequence length="212" mass="23130">MADTIVDAVSRALDEAPGRNFRETVDLAVNLRDLDLNDPSKRVDESIVLPSGTGQDTQIVVFATGETALRAEDAADEVLGPDELEDFGDDTDAAKDLADETDFFVAEAGLMQDIGRYLGTVLGPRGKMPTPLQPDDDVVETVNRMKNTVQLRSRDRRTFHTRVGADDMTPDEIAENIDVIVRRLEATLEKGPLNIDSVYVKTTMGPSVEVPA</sequence>
<keyword id="KW-1185">Reference proteome</keyword>
<keyword id="KW-0678">Repressor</keyword>
<keyword id="KW-0687">Ribonucleoprotein</keyword>
<keyword id="KW-0689">Ribosomal protein</keyword>
<keyword id="KW-0694">RNA-binding</keyword>
<keyword id="KW-0699">rRNA-binding</keyword>
<keyword id="KW-0810">Translation regulation</keyword>
<keyword id="KW-0820">tRNA-binding</keyword>
<organism>
    <name type="scientific">Haloferax volcanii (strain ATCC 29605 / DSM 3757 / JCM 8879 / NBRC 14742 / NCIMB 2012 / VKM B-1768 / DS2)</name>
    <name type="common">Halobacterium volcanii</name>
    <dbReference type="NCBI Taxonomy" id="309800"/>
    <lineage>
        <taxon>Archaea</taxon>
        <taxon>Methanobacteriati</taxon>
        <taxon>Methanobacteriota</taxon>
        <taxon>Stenosarchaea group</taxon>
        <taxon>Halobacteria</taxon>
        <taxon>Halobacteriales</taxon>
        <taxon>Haloferacaceae</taxon>
        <taxon>Haloferax</taxon>
    </lineage>
</organism>
<gene>
    <name evidence="2" type="primary">rpl1</name>
    <name type="ordered locus">HVO_2757</name>
</gene>